<keyword id="KW-0963">Cytoplasm</keyword>
<keyword id="KW-0210">Decarboxylase</keyword>
<keyword id="KW-0456">Lyase</keyword>
<keyword id="KW-0627">Porphyrin biosynthesis</keyword>
<accession>B0JL12</accession>
<name>DCUP_MICAN</name>
<gene>
    <name evidence="1" type="primary">hemE</name>
    <name type="ordered locus">MAE_31290</name>
</gene>
<sequence length="350" mass="39172">MTDSPEIPYLLRAAKGEILPRPPVWMMRQAGRYMQIYRELRDKYPSFRERSENADLAIEISLQPWRAFQPDGVIMFSDILTPLAGIGIPFDIIESKGPIIDSPIRTQAQVDQLNPLDPDQSLPFIKTILKTLRQEVGNKSTVLGFVGAPWTLAAYAVEGKGSKSYSVIKGMAFSEPSVLHQFLDKLADMIATYVRYQIDCGAQVVQMFDSWAGQLTPQDYDVFALPYQQKVVRLVKETHPDTPLILYISGSAGVLERMGKSGVDIISVDWTVDLAEARQRLGKAMMVQGNIDPGVLFGSQSFIRERIIDTIRKAGNQGHILNLGHGVLVGTPEDNVRFFFETAKQFSYQD</sequence>
<feature type="chain" id="PRO_1000078077" description="Uroporphyrinogen decarboxylase">
    <location>
        <begin position="1"/>
        <end position="350"/>
    </location>
</feature>
<feature type="binding site" evidence="1">
    <location>
        <begin position="28"/>
        <end position="32"/>
    </location>
    <ligand>
        <name>substrate</name>
    </ligand>
</feature>
<feature type="binding site" evidence="1">
    <location>
        <position position="78"/>
    </location>
    <ligand>
        <name>substrate</name>
    </ligand>
</feature>
<feature type="binding site" evidence="1">
    <location>
        <position position="155"/>
    </location>
    <ligand>
        <name>substrate</name>
    </ligand>
</feature>
<feature type="binding site" evidence="1">
    <location>
        <position position="210"/>
    </location>
    <ligand>
        <name>substrate</name>
    </ligand>
</feature>
<feature type="binding site" evidence="1">
    <location>
        <position position="325"/>
    </location>
    <ligand>
        <name>substrate</name>
    </ligand>
</feature>
<feature type="site" description="Transition state stabilizer" evidence="1">
    <location>
        <position position="78"/>
    </location>
</feature>
<evidence type="ECO:0000255" key="1">
    <source>
        <dbReference type="HAMAP-Rule" id="MF_00218"/>
    </source>
</evidence>
<comment type="function">
    <text evidence="1">Catalyzes the decarboxylation of four acetate groups of uroporphyrinogen-III to yield coproporphyrinogen-III.</text>
</comment>
<comment type="catalytic activity">
    <reaction evidence="1">
        <text>uroporphyrinogen III + 4 H(+) = coproporphyrinogen III + 4 CO2</text>
        <dbReference type="Rhea" id="RHEA:19865"/>
        <dbReference type="ChEBI" id="CHEBI:15378"/>
        <dbReference type="ChEBI" id="CHEBI:16526"/>
        <dbReference type="ChEBI" id="CHEBI:57308"/>
        <dbReference type="ChEBI" id="CHEBI:57309"/>
        <dbReference type="EC" id="4.1.1.37"/>
    </reaction>
</comment>
<comment type="pathway">
    <text evidence="1">Porphyrin-containing compound metabolism; protoporphyrin-IX biosynthesis; coproporphyrinogen-III from 5-aminolevulinate: step 4/4.</text>
</comment>
<comment type="subunit">
    <text evidence="1">Homodimer.</text>
</comment>
<comment type="subcellular location">
    <subcellularLocation>
        <location evidence="1">Cytoplasm</location>
    </subcellularLocation>
</comment>
<comment type="similarity">
    <text evidence="1">Belongs to the uroporphyrinogen decarboxylase family.</text>
</comment>
<protein>
    <recommendedName>
        <fullName evidence="1">Uroporphyrinogen decarboxylase</fullName>
        <shortName evidence="1">UPD</shortName>
        <shortName evidence="1">URO-D</shortName>
        <ecNumber evidence="1">4.1.1.37</ecNumber>
    </recommendedName>
</protein>
<organism>
    <name type="scientific">Microcystis aeruginosa (strain NIES-843 / IAM M-2473)</name>
    <dbReference type="NCBI Taxonomy" id="449447"/>
    <lineage>
        <taxon>Bacteria</taxon>
        <taxon>Bacillati</taxon>
        <taxon>Cyanobacteriota</taxon>
        <taxon>Cyanophyceae</taxon>
        <taxon>Oscillatoriophycideae</taxon>
        <taxon>Chroococcales</taxon>
        <taxon>Microcystaceae</taxon>
        <taxon>Microcystis</taxon>
    </lineage>
</organism>
<reference key="1">
    <citation type="journal article" date="2007" name="DNA Res.">
        <title>Complete genomic structure of the bloom-forming toxic cyanobacterium Microcystis aeruginosa NIES-843.</title>
        <authorList>
            <person name="Kaneko T."/>
            <person name="Nakajima N."/>
            <person name="Okamoto S."/>
            <person name="Suzuki I."/>
            <person name="Tanabe Y."/>
            <person name="Tamaoki M."/>
            <person name="Nakamura Y."/>
            <person name="Kasai F."/>
            <person name="Watanabe A."/>
            <person name="Kawashima K."/>
            <person name="Kishida Y."/>
            <person name="Ono A."/>
            <person name="Shimizu Y."/>
            <person name="Takahashi C."/>
            <person name="Minami C."/>
            <person name="Fujishiro T."/>
            <person name="Kohara M."/>
            <person name="Katoh M."/>
            <person name="Nakazaki N."/>
            <person name="Nakayama S."/>
            <person name="Yamada M."/>
            <person name="Tabata S."/>
            <person name="Watanabe M.M."/>
        </authorList>
    </citation>
    <scope>NUCLEOTIDE SEQUENCE [LARGE SCALE GENOMIC DNA]</scope>
    <source>
        <strain>NIES-843 / IAM M-247</strain>
    </source>
</reference>
<proteinExistence type="inferred from homology"/>
<dbReference type="EC" id="4.1.1.37" evidence="1"/>
<dbReference type="EMBL" id="AP009552">
    <property type="protein sequence ID" value="BAG02951.1"/>
    <property type="molecule type" value="Genomic_DNA"/>
</dbReference>
<dbReference type="RefSeq" id="WP_012266095.1">
    <property type="nucleotide sequence ID" value="NC_010296.1"/>
</dbReference>
<dbReference type="SMR" id="B0JL12"/>
<dbReference type="STRING" id="449447.MAE_31290"/>
<dbReference type="PaxDb" id="449447-MAE_31290"/>
<dbReference type="EnsemblBacteria" id="BAG02951">
    <property type="protein sequence ID" value="BAG02951"/>
    <property type="gene ID" value="MAE_31290"/>
</dbReference>
<dbReference type="GeneID" id="66707455"/>
<dbReference type="KEGG" id="mar:MAE_31290"/>
<dbReference type="eggNOG" id="COG0407">
    <property type="taxonomic scope" value="Bacteria"/>
</dbReference>
<dbReference type="HOGENOM" id="CLU_040933_0_2_3"/>
<dbReference type="BioCyc" id="MAER449447:MAE_RS13555-MONOMER"/>
<dbReference type="UniPathway" id="UPA00251">
    <property type="reaction ID" value="UER00321"/>
</dbReference>
<dbReference type="Proteomes" id="UP000001510">
    <property type="component" value="Chromosome"/>
</dbReference>
<dbReference type="GO" id="GO:0005737">
    <property type="term" value="C:cytoplasm"/>
    <property type="evidence" value="ECO:0007669"/>
    <property type="project" value="UniProtKB-SubCell"/>
</dbReference>
<dbReference type="GO" id="GO:0004853">
    <property type="term" value="F:uroporphyrinogen decarboxylase activity"/>
    <property type="evidence" value="ECO:0007669"/>
    <property type="project" value="UniProtKB-UniRule"/>
</dbReference>
<dbReference type="GO" id="GO:0006782">
    <property type="term" value="P:protoporphyrinogen IX biosynthetic process"/>
    <property type="evidence" value="ECO:0007669"/>
    <property type="project" value="UniProtKB-UniRule"/>
</dbReference>
<dbReference type="CDD" id="cd00717">
    <property type="entry name" value="URO-D"/>
    <property type="match status" value="1"/>
</dbReference>
<dbReference type="FunFam" id="3.20.20.210:FF:000006">
    <property type="entry name" value="Uroporphyrinogen decarboxylase"/>
    <property type="match status" value="1"/>
</dbReference>
<dbReference type="Gene3D" id="3.20.20.210">
    <property type="match status" value="1"/>
</dbReference>
<dbReference type="HAMAP" id="MF_00218">
    <property type="entry name" value="URO_D"/>
    <property type="match status" value="1"/>
</dbReference>
<dbReference type="InterPro" id="IPR038071">
    <property type="entry name" value="UROD/MetE-like_sf"/>
</dbReference>
<dbReference type="InterPro" id="IPR006361">
    <property type="entry name" value="Uroporphyrinogen_deCO2ase_HemE"/>
</dbReference>
<dbReference type="InterPro" id="IPR000257">
    <property type="entry name" value="Uroporphyrinogen_deCOase"/>
</dbReference>
<dbReference type="NCBIfam" id="TIGR01464">
    <property type="entry name" value="hemE"/>
    <property type="match status" value="1"/>
</dbReference>
<dbReference type="PANTHER" id="PTHR21091">
    <property type="entry name" value="METHYLTETRAHYDROFOLATE:HOMOCYSTEINE METHYLTRANSFERASE RELATED"/>
    <property type="match status" value="1"/>
</dbReference>
<dbReference type="PANTHER" id="PTHR21091:SF169">
    <property type="entry name" value="UROPORPHYRINOGEN DECARBOXYLASE"/>
    <property type="match status" value="1"/>
</dbReference>
<dbReference type="Pfam" id="PF01208">
    <property type="entry name" value="URO-D"/>
    <property type="match status" value="1"/>
</dbReference>
<dbReference type="SUPFAM" id="SSF51726">
    <property type="entry name" value="UROD/MetE-like"/>
    <property type="match status" value="1"/>
</dbReference>
<dbReference type="PROSITE" id="PS00906">
    <property type="entry name" value="UROD_1"/>
    <property type="match status" value="1"/>
</dbReference>
<dbReference type="PROSITE" id="PS00907">
    <property type="entry name" value="UROD_2"/>
    <property type="match status" value="1"/>
</dbReference>